<protein>
    <recommendedName>
        <fullName evidence="1">F420-dependent methylenetetrahydromethanopterin dehydrogenase</fullName>
        <shortName evidence="1">MTD</shortName>
        <ecNumber evidence="1">1.5.98.1</ecNumber>
    </recommendedName>
    <alternativeName>
        <fullName evidence="1">Coenzyme F420-dependent N5,N10-methylenetetrahydromethanopterin dehydrogenase</fullName>
    </alternativeName>
</protein>
<comment type="function">
    <text evidence="1">Catalyzes the reversible reduction of methenyl-H(4)MPT(+) to methylene-H(4)MPT.</text>
</comment>
<comment type="catalytic activity">
    <reaction evidence="1">
        <text>5,10-methylenetetrahydromethanopterin + oxidized coenzyme F420-(gamma-L-Glu)(n) + 2 H(+) = 5,10-methenyl-5,6,7,8-tetrahydromethanopterin + reduced coenzyme F420-(gamma-L-Glu)(n)</text>
        <dbReference type="Rhea" id="RHEA:16721"/>
        <dbReference type="Rhea" id="RHEA-COMP:12939"/>
        <dbReference type="Rhea" id="RHEA-COMP:14378"/>
        <dbReference type="ChEBI" id="CHEBI:15378"/>
        <dbReference type="ChEBI" id="CHEBI:57818"/>
        <dbReference type="ChEBI" id="CHEBI:58337"/>
        <dbReference type="ChEBI" id="CHEBI:133980"/>
        <dbReference type="ChEBI" id="CHEBI:139511"/>
        <dbReference type="EC" id="1.5.98.1"/>
    </reaction>
</comment>
<comment type="pathway">
    <text evidence="1">One-carbon metabolism; methanogenesis from CO(2); 5,10-methylene-5,6,7,8-tetrahydromethanopterin from 5,10-methenyl-5,6,7,8-tetrahydromethanopterin (coenzyme F420 route): step 1/1.</text>
</comment>
<comment type="similarity">
    <text evidence="1">Belongs to the MTD family.</text>
</comment>
<evidence type="ECO:0000255" key="1">
    <source>
        <dbReference type="HAMAP-Rule" id="MF_00058"/>
    </source>
</evidence>
<evidence type="ECO:0000256" key="2">
    <source>
        <dbReference type="SAM" id="MobiDB-lite"/>
    </source>
</evidence>
<gene>
    <name evidence="1" type="primary">mtd</name>
    <name type="ordered locus">Maeo_1367</name>
</gene>
<proteinExistence type="inferred from homology"/>
<keyword id="KW-0484">Methanogenesis</keyword>
<keyword id="KW-0554">One-carbon metabolism</keyword>
<keyword id="KW-0560">Oxidoreductase</keyword>
<reference key="1">
    <citation type="submission" date="2007-06" db="EMBL/GenBank/DDBJ databases">
        <title>Complete sequence of Methanococcus aeolicus Nankai-3.</title>
        <authorList>
            <consortium name="US DOE Joint Genome Institute"/>
            <person name="Copeland A."/>
            <person name="Lucas S."/>
            <person name="Lapidus A."/>
            <person name="Barry K."/>
            <person name="Glavina del Rio T."/>
            <person name="Dalin E."/>
            <person name="Tice H."/>
            <person name="Pitluck S."/>
            <person name="Chain P."/>
            <person name="Malfatti S."/>
            <person name="Shin M."/>
            <person name="Vergez L."/>
            <person name="Schmutz J."/>
            <person name="Larimer F."/>
            <person name="Land M."/>
            <person name="Hauser L."/>
            <person name="Kyrpides N."/>
            <person name="Lykidis A."/>
            <person name="Sieprawska-Lupa M."/>
            <person name="Whitman W.B."/>
            <person name="Richardson P."/>
        </authorList>
    </citation>
    <scope>NUCLEOTIDE SEQUENCE [LARGE SCALE GENOMIC DNA]</scope>
    <source>
        <strain>ATCC BAA-1280 / DSM 17508 / OCM 812 / Nankai-3</strain>
    </source>
</reference>
<organism>
    <name type="scientific">Methanococcus aeolicus (strain ATCC BAA-1280 / DSM 17508 / OCM 812 / Nankai-3)</name>
    <dbReference type="NCBI Taxonomy" id="419665"/>
    <lineage>
        <taxon>Archaea</taxon>
        <taxon>Methanobacteriati</taxon>
        <taxon>Methanobacteriota</taxon>
        <taxon>Methanomada group</taxon>
        <taxon>Methanococci</taxon>
        <taxon>Methanococcales</taxon>
        <taxon>Methanococcaceae</taxon>
        <taxon>Methanococcus</taxon>
    </lineage>
</organism>
<feature type="chain" id="PRO_1000007670" description="F420-dependent methylenetetrahydromethanopterin dehydrogenase">
    <location>
        <begin position="1"/>
        <end position="277"/>
    </location>
</feature>
<feature type="region of interest" description="Disordered" evidence="2">
    <location>
        <begin position="249"/>
        <end position="277"/>
    </location>
</feature>
<accession>A6UWS1</accession>
<sequence>MVVKIGIIKCGNIGMSPLIDLALDERADRTNIDVISIGSGAKMGPNQVVEVTTKMVEDIKPDFIIYVGPNPAAPGPAKAREILSASDIPSVIIGDAPGIKAKDKMAEEGLGYILIKCDPMIGARRQFLDPVEMAMFNADVIRVLAGTGAARVVQNAIDDIVEAIEAGNEIELPKIVVTDAKSVAAAEFSNPYAKAKAMAAFAMAEQVANIDVKGCFMTKEMEKYIPIVASAHEMIRTAAKLVDEARELEKATDSVSRKPHGADGKRLNKTKLMEKPE</sequence>
<dbReference type="EC" id="1.5.98.1" evidence="1"/>
<dbReference type="EMBL" id="CP000743">
    <property type="protein sequence ID" value="ABR56943.1"/>
    <property type="molecule type" value="Genomic_DNA"/>
</dbReference>
<dbReference type="RefSeq" id="WP_011974075.1">
    <property type="nucleotide sequence ID" value="NC_009635.1"/>
</dbReference>
<dbReference type="SMR" id="A6UWS1"/>
<dbReference type="STRING" id="419665.Maeo_1367"/>
<dbReference type="GeneID" id="5327444"/>
<dbReference type="KEGG" id="mae:Maeo_1367"/>
<dbReference type="eggNOG" id="arCOG04382">
    <property type="taxonomic scope" value="Archaea"/>
</dbReference>
<dbReference type="HOGENOM" id="CLU_1006890_0_0_2"/>
<dbReference type="OrthoDB" id="49844at2157"/>
<dbReference type="UniPathway" id="UPA00640">
    <property type="reaction ID" value="UER00695"/>
</dbReference>
<dbReference type="Proteomes" id="UP000001106">
    <property type="component" value="Chromosome"/>
</dbReference>
<dbReference type="GO" id="GO:0008901">
    <property type="term" value="F:ferredoxin hydrogenase activity"/>
    <property type="evidence" value="ECO:0007669"/>
    <property type="project" value="InterPro"/>
</dbReference>
<dbReference type="GO" id="GO:0030268">
    <property type="term" value="F:methylenetetrahydromethanopterin dehydrogenase activity"/>
    <property type="evidence" value="ECO:0007669"/>
    <property type="project" value="UniProtKB-UniRule"/>
</dbReference>
<dbReference type="GO" id="GO:0019386">
    <property type="term" value="P:methanogenesis, from carbon dioxide"/>
    <property type="evidence" value="ECO:0007669"/>
    <property type="project" value="UniProtKB-UniRule"/>
</dbReference>
<dbReference type="GO" id="GO:0006730">
    <property type="term" value="P:one-carbon metabolic process"/>
    <property type="evidence" value="ECO:0007669"/>
    <property type="project" value="UniProtKB-UniRule"/>
</dbReference>
<dbReference type="Gene3D" id="6.10.140.120">
    <property type="match status" value="1"/>
</dbReference>
<dbReference type="Gene3D" id="3.40.50.10830">
    <property type="entry name" value="F420-dependent methylenetetrahydromethanopterin dehydrogenase (MTD)"/>
    <property type="match status" value="1"/>
</dbReference>
<dbReference type="HAMAP" id="MF_00058">
    <property type="entry name" value="MTD"/>
    <property type="match status" value="1"/>
</dbReference>
<dbReference type="InterPro" id="IPR002844">
    <property type="entry name" value="MTD"/>
</dbReference>
<dbReference type="InterPro" id="IPR036080">
    <property type="entry name" value="MTD_sf"/>
</dbReference>
<dbReference type="NCBIfam" id="NF002162">
    <property type="entry name" value="PRK00994.1"/>
    <property type="match status" value="1"/>
</dbReference>
<dbReference type="Pfam" id="PF01993">
    <property type="entry name" value="MTD"/>
    <property type="match status" value="1"/>
</dbReference>
<dbReference type="PIRSF" id="PIRSF005627">
    <property type="entry name" value="MTD"/>
    <property type="match status" value="1"/>
</dbReference>
<dbReference type="SUPFAM" id="SSF102324">
    <property type="entry name" value="F420-dependent methylenetetrahydromethanopterin dehydrogenase (MTD)"/>
    <property type="match status" value="1"/>
</dbReference>
<name>MTD_META3</name>